<sequence length="221" mass="22777">MMAQRNSGAPDNAGGSNDGREGGRGRRDNRDDRRGGRDNAEKSNYLERVVTINRVSKVVKGGRRFSFTALVIVGDGHGLVGVGYGKAKEVPAAIAKGVDEARKNFFRVPLIGGTITHPVQGEDSAGVVMLRPASAGTGVIAGGAARAVLECAGVHDILAKSLGSDNAINVVHATVAALKQLQRPEEVAARRGLPIEDVAPAGMLRARAEFAAAAAQGGSHG</sequence>
<organism>
    <name type="scientific">Mycobacteroides abscessus (strain ATCC 19977 / DSM 44196 / CCUG 20993 / CIP 104536 / JCM 13569 / NCTC 13031 / TMC 1543 / L948)</name>
    <name type="common">Mycobacterium abscessus</name>
    <dbReference type="NCBI Taxonomy" id="561007"/>
    <lineage>
        <taxon>Bacteria</taxon>
        <taxon>Bacillati</taxon>
        <taxon>Actinomycetota</taxon>
        <taxon>Actinomycetes</taxon>
        <taxon>Mycobacteriales</taxon>
        <taxon>Mycobacteriaceae</taxon>
        <taxon>Mycobacteroides</taxon>
        <taxon>Mycobacteroides abscessus</taxon>
    </lineage>
</organism>
<reference key="1">
    <citation type="journal article" date="2009" name="PLoS ONE">
        <title>Non mycobacterial virulence genes in the genome of the emerging pathogen Mycobacterium abscessus.</title>
        <authorList>
            <person name="Ripoll F."/>
            <person name="Pasek S."/>
            <person name="Schenowitz C."/>
            <person name="Dossat C."/>
            <person name="Barbe V."/>
            <person name="Rottman M."/>
            <person name="Macheras E."/>
            <person name="Heym B."/>
            <person name="Herrmann J.L."/>
            <person name="Daffe M."/>
            <person name="Brosch R."/>
            <person name="Risler J.L."/>
            <person name="Gaillard J.L."/>
        </authorList>
    </citation>
    <scope>NUCLEOTIDE SEQUENCE [LARGE SCALE GENOMIC DNA]</scope>
    <source>
        <strain>ATCC 19977 / DSM 44196 / CCUG 20993 / CIP 104536 / JCM 13569 / NCTC 13031 / TMC 1543 / L948</strain>
    </source>
</reference>
<gene>
    <name evidence="1" type="primary">rpsE</name>
    <name type="ordered locus">MAB_3795c</name>
</gene>
<name>RS5_MYCA9</name>
<protein>
    <recommendedName>
        <fullName evidence="1">Small ribosomal subunit protein uS5</fullName>
    </recommendedName>
    <alternativeName>
        <fullName evidence="3">30S ribosomal protein S5</fullName>
    </alternativeName>
</protein>
<dbReference type="EMBL" id="CU458896">
    <property type="protein sequence ID" value="CAM63870.1"/>
    <property type="molecule type" value="Genomic_DNA"/>
</dbReference>
<dbReference type="RefSeq" id="WP_005055717.1">
    <property type="nucleotide sequence ID" value="NZ_MLCG01000001.1"/>
</dbReference>
<dbReference type="SMR" id="B1MGC5"/>
<dbReference type="GeneID" id="93380735"/>
<dbReference type="KEGG" id="mab:MAB_3795c"/>
<dbReference type="Proteomes" id="UP000007137">
    <property type="component" value="Chromosome"/>
</dbReference>
<dbReference type="GO" id="GO:0015935">
    <property type="term" value="C:small ribosomal subunit"/>
    <property type="evidence" value="ECO:0007669"/>
    <property type="project" value="InterPro"/>
</dbReference>
<dbReference type="GO" id="GO:0019843">
    <property type="term" value="F:rRNA binding"/>
    <property type="evidence" value="ECO:0007669"/>
    <property type="project" value="UniProtKB-UniRule"/>
</dbReference>
<dbReference type="GO" id="GO:0003735">
    <property type="term" value="F:structural constituent of ribosome"/>
    <property type="evidence" value="ECO:0007669"/>
    <property type="project" value="InterPro"/>
</dbReference>
<dbReference type="GO" id="GO:0006412">
    <property type="term" value="P:translation"/>
    <property type="evidence" value="ECO:0007669"/>
    <property type="project" value="UniProtKB-UniRule"/>
</dbReference>
<dbReference type="FunFam" id="3.30.160.20:FF:000001">
    <property type="entry name" value="30S ribosomal protein S5"/>
    <property type="match status" value="1"/>
</dbReference>
<dbReference type="FunFam" id="3.30.230.10:FF:000002">
    <property type="entry name" value="30S ribosomal protein S5"/>
    <property type="match status" value="1"/>
</dbReference>
<dbReference type="Gene3D" id="3.30.160.20">
    <property type="match status" value="1"/>
</dbReference>
<dbReference type="Gene3D" id="3.30.230.10">
    <property type="match status" value="1"/>
</dbReference>
<dbReference type="HAMAP" id="MF_01307_B">
    <property type="entry name" value="Ribosomal_uS5_B"/>
    <property type="match status" value="1"/>
</dbReference>
<dbReference type="InterPro" id="IPR020568">
    <property type="entry name" value="Ribosomal_Su5_D2-typ_SF"/>
</dbReference>
<dbReference type="InterPro" id="IPR000851">
    <property type="entry name" value="Ribosomal_uS5"/>
</dbReference>
<dbReference type="InterPro" id="IPR005712">
    <property type="entry name" value="Ribosomal_uS5_bac-type"/>
</dbReference>
<dbReference type="InterPro" id="IPR005324">
    <property type="entry name" value="Ribosomal_uS5_C"/>
</dbReference>
<dbReference type="InterPro" id="IPR013810">
    <property type="entry name" value="Ribosomal_uS5_N"/>
</dbReference>
<dbReference type="InterPro" id="IPR018192">
    <property type="entry name" value="Ribosomal_uS5_N_CS"/>
</dbReference>
<dbReference type="InterPro" id="IPR014721">
    <property type="entry name" value="Ribsml_uS5_D2-typ_fold_subgr"/>
</dbReference>
<dbReference type="NCBIfam" id="TIGR01021">
    <property type="entry name" value="rpsE_bact"/>
    <property type="match status" value="1"/>
</dbReference>
<dbReference type="PANTHER" id="PTHR48277">
    <property type="entry name" value="MITOCHONDRIAL RIBOSOMAL PROTEIN S5"/>
    <property type="match status" value="1"/>
</dbReference>
<dbReference type="PANTHER" id="PTHR48277:SF1">
    <property type="entry name" value="MITOCHONDRIAL RIBOSOMAL PROTEIN S5"/>
    <property type="match status" value="1"/>
</dbReference>
<dbReference type="Pfam" id="PF00333">
    <property type="entry name" value="Ribosomal_S5"/>
    <property type="match status" value="1"/>
</dbReference>
<dbReference type="Pfam" id="PF03719">
    <property type="entry name" value="Ribosomal_S5_C"/>
    <property type="match status" value="1"/>
</dbReference>
<dbReference type="SUPFAM" id="SSF54768">
    <property type="entry name" value="dsRNA-binding domain-like"/>
    <property type="match status" value="1"/>
</dbReference>
<dbReference type="SUPFAM" id="SSF54211">
    <property type="entry name" value="Ribosomal protein S5 domain 2-like"/>
    <property type="match status" value="1"/>
</dbReference>
<dbReference type="PROSITE" id="PS00585">
    <property type="entry name" value="RIBOSOMAL_S5"/>
    <property type="match status" value="1"/>
</dbReference>
<dbReference type="PROSITE" id="PS50881">
    <property type="entry name" value="S5_DSRBD"/>
    <property type="match status" value="1"/>
</dbReference>
<comment type="function">
    <text evidence="1">With S4 and S12 plays an important role in translational accuracy.</text>
</comment>
<comment type="function">
    <text evidence="1">Located at the back of the 30S subunit body where it stabilizes the conformation of the head with respect to the body.</text>
</comment>
<comment type="subunit">
    <text evidence="1">Part of the 30S ribosomal subunit. Contacts proteins S4 and S8.</text>
</comment>
<comment type="domain">
    <text>The N-terminal domain interacts with the head of the 30S subunit; the C-terminal domain interacts with the body and contacts protein S4. The interaction surface between S4 and S5 is involved in control of translational fidelity.</text>
</comment>
<comment type="similarity">
    <text evidence="1">Belongs to the universal ribosomal protein uS5 family.</text>
</comment>
<keyword id="KW-1185">Reference proteome</keyword>
<keyword id="KW-0687">Ribonucleoprotein</keyword>
<keyword id="KW-0689">Ribosomal protein</keyword>
<keyword id="KW-0694">RNA-binding</keyword>
<keyword id="KW-0699">rRNA-binding</keyword>
<feature type="chain" id="PRO_1000140872" description="Small ribosomal subunit protein uS5">
    <location>
        <begin position="1"/>
        <end position="221"/>
    </location>
</feature>
<feature type="domain" description="S5 DRBM" evidence="1">
    <location>
        <begin position="45"/>
        <end position="108"/>
    </location>
</feature>
<feature type="region of interest" description="Disordered" evidence="2">
    <location>
        <begin position="1"/>
        <end position="40"/>
    </location>
</feature>
<feature type="compositionally biased region" description="Basic and acidic residues" evidence="2">
    <location>
        <begin position="18"/>
        <end position="40"/>
    </location>
</feature>
<evidence type="ECO:0000255" key="1">
    <source>
        <dbReference type="HAMAP-Rule" id="MF_01307"/>
    </source>
</evidence>
<evidence type="ECO:0000256" key="2">
    <source>
        <dbReference type="SAM" id="MobiDB-lite"/>
    </source>
</evidence>
<evidence type="ECO:0000305" key="3"/>
<proteinExistence type="inferred from homology"/>
<accession>B1MGC5</accession>